<feature type="initiator methionine" description="Removed" evidence="2">
    <location>
        <position position="1"/>
    </location>
</feature>
<feature type="chain" id="PRO_0000208817" description="Elongation factor 1-gamma">
    <location>
        <begin position="2"/>
        <end position="437"/>
    </location>
</feature>
<feature type="domain" description="GST N-terminal">
    <location>
        <begin position="2"/>
        <end position="87"/>
    </location>
</feature>
<feature type="domain" description="GST C-terminal">
    <location>
        <begin position="88"/>
        <end position="216"/>
    </location>
</feature>
<feature type="domain" description="EF-1-gamma C-terminal" evidence="4">
    <location>
        <begin position="276"/>
        <end position="437"/>
    </location>
</feature>
<feature type="region of interest" description="Disordered" evidence="5">
    <location>
        <begin position="221"/>
        <end position="268"/>
    </location>
</feature>
<feature type="compositionally biased region" description="Basic and acidic residues" evidence="5">
    <location>
        <begin position="221"/>
        <end position="254"/>
    </location>
</feature>
<feature type="modified residue" description="N-acetylalanine" evidence="2">
    <location>
        <position position="2"/>
    </location>
</feature>
<feature type="modified residue" description="N6-acetyllysine" evidence="2">
    <location>
        <position position="147"/>
    </location>
</feature>
<feature type="modified residue" description="N6-acetyllysine" evidence="3">
    <location>
        <position position="212"/>
    </location>
</feature>
<feature type="modified residue" description="N6-acetyllysine" evidence="3">
    <location>
        <position position="401"/>
    </location>
</feature>
<feature type="modified residue" description="N6-acetyllysine; alternate" evidence="2">
    <location>
        <position position="434"/>
    </location>
</feature>
<feature type="modified residue" description="N6-malonyllysine; alternate" evidence="1">
    <location>
        <position position="434"/>
    </location>
</feature>
<feature type="cross-link" description="Glycyl lysine isopeptide (Lys-Gly) (interchain with G-Cter in SUMO1)" evidence="2">
    <location>
        <position position="253"/>
    </location>
</feature>
<feature type="cross-link" description="Glycyl lysine isopeptide (Lys-Gly) (interchain with G-Cter in SUMO2)" evidence="2">
    <location>
        <position position="285"/>
    </location>
</feature>
<sequence>MAAGTLYTYPENWRAFKALIAAQYSGAQIRVLSAPPHFHFGQTNRTPEFLRKFPAGKVPAFEGDDGFCVFESNAIAYYVSNEELRGSTPEAAAQVVQWVSFADSDIVPPASTWVFPTLGIMHHNKQATENAKEEVKRILGLLDTHLKTRTFLVGERVTLADITVVCTLLWLYKQVLEPSFRQAFPNTNRWFLTCINQPQFRAILGEVKLCEKMAQFDAKKFAESQPKKDTPRKEKGSREEKQKPQTERKEEKKAAAPAPEEEMDECEQALAAEPKAKDPFAHLPKSTFVLDEFKRKYSNEDTLSVALPYFWEHFDKDGWSLWYAEYRFPEELTQTFMSCNLITGMFQRLDKLRKNAFASVILFGTNNSSSISGVWVFRGQDLAFPLSPDWQVDYESYTWRKLDPGSEETQTLVREYFSWEGAFQHVGKAVNQGKIFK</sequence>
<dbReference type="EMBL" id="BC079398">
    <property type="protein sequence ID" value="AAH79398.1"/>
    <property type="molecule type" value="mRNA"/>
</dbReference>
<dbReference type="EMBL" id="BC098895">
    <property type="protein sequence ID" value="AAH98895.1"/>
    <property type="molecule type" value="mRNA"/>
</dbReference>
<dbReference type="RefSeq" id="NP_001004223.1">
    <property type="nucleotide sequence ID" value="NM_001004223.2"/>
</dbReference>
<dbReference type="SMR" id="Q68FR6"/>
<dbReference type="BioGRID" id="254421">
    <property type="interactions" value="5"/>
</dbReference>
<dbReference type="FunCoup" id="Q68FR6">
    <property type="interactions" value="3038"/>
</dbReference>
<dbReference type="IntAct" id="Q68FR6">
    <property type="interactions" value="4"/>
</dbReference>
<dbReference type="MINT" id="Q68FR6"/>
<dbReference type="STRING" id="10116.ENSRNOP00000027305"/>
<dbReference type="iPTMnet" id="Q68FR6"/>
<dbReference type="PhosphoSitePlus" id="Q68FR6"/>
<dbReference type="SwissPalm" id="Q68FR6"/>
<dbReference type="jPOST" id="Q68FR6"/>
<dbReference type="PaxDb" id="10116-ENSRNOP00000027305"/>
<dbReference type="Ensembl" id="ENSRNOT00000027305.8">
    <property type="protein sequence ID" value="ENSRNOP00000027305.4"/>
    <property type="gene ID" value="ENSRNOG00000020075.8"/>
</dbReference>
<dbReference type="GeneID" id="293725"/>
<dbReference type="KEGG" id="rno:293725"/>
<dbReference type="UCSC" id="RGD:1302939">
    <property type="organism name" value="rat"/>
</dbReference>
<dbReference type="AGR" id="RGD:1302939"/>
<dbReference type="CTD" id="1937"/>
<dbReference type="RGD" id="1302939">
    <property type="gene designation" value="Eef1g"/>
</dbReference>
<dbReference type="eggNOG" id="KOG0867">
    <property type="taxonomic scope" value="Eukaryota"/>
</dbReference>
<dbReference type="eggNOG" id="KOG1627">
    <property type="taxonomic scope" value="Eukaryota"/>
</dbReference>
<dbReference type="GeneTree" id="ENSGT00390000007552"/>
<dbReference type="HOGENOM" id="CLU_011226_3_1_1"/>
<dbReference type="InParanoid" id="Q68FR6"/>
<dbReference type="OrthoDB" id="249703at2759"/>
<dbReference type="PhylomeDB" id="Q68FR6"/>
<dbReference type="TreeFam" id="TF314343"/>
<dbReference type="Reactome" id="R-RNO-156842">
    <property type="pathway name" value="Eukaryotic Translation Elongation"/>
</dbReference>
<dbReference type="PRO" id="PR:Q68FR6"/>
<dbReference type="Proteomes" id="UP000002494">
    <property type="component" value="Chromosome 1"/>
</dbReference>
<dbReference type="Bgee" id="ENSRNOG00000020075">
    <property type="expression patterns" value="Expressed in spleen and 19 other cell types or tissues"/>
</dbReference>
<dbReference type="GO" id="GO:0005737">
    <property type="term" value="C:cytoplasm"/>
    <property type="evidence" value="ECO:0000266"/>
    <property type="project" value="RGD"/>
</dbReference>
<dbReference type="GO" id="GO:0005783">
    <property type="term" value="C:endoplasmic reticulum"/>
    <property type="evidence" value="ECO:0000266"/>
    <property type="project" value="RGD"/>
</dbReference>
<dbReference type="GO" id="GO:0005634">
    <property type="term" value="C:nucleus"/>
    <property type="evidence" value="ECO:0000318"/>
    <property type="project" value="GO_Central"/>
</dbReference>
<dbReference type="GO" id="GO:0003746">
    <property type="term" value="F:translation elongation factor activity"/>
    <property type="evidence" value="ECO:0007669"/>
    <property type="project" value="UniProtKB-KW"/>
</dbReference>
<dbReference type="GO" id="GO:0009615">
    <property type="term" value="P:response to virus"/>
    <property type="evidence" value="ECO:0000266"/>
    <property type="project" value="RGD"/>
</dbReference>
<dbReference type="GO" id="GO:0006414">
    <property type="term" value="P:translational elongation"/>
    <property type="evidence" value="ECO:0000318"/>
    <property type="project" value="GO_Central"/>
</dbReference>
<dbReference type="CDD" id="cd03181">
    <property type="entry name" value="GST_C_EF1Bgamma_like"/>
    <property type="match status" value="1"/>
</dbReference>
<dbReference type="CDD" id="cd03044">
    <property type="entry name" value="GST_N_EF1Bgamma"/>
    <property type="match status" value="1"/>
</dbReference>
<dbReference type="FunFam" id="1.20.1050.10:FF:000021">
    <property type="entry name" value="Elongation factor 1-gamma"/>
    <property type="match status" value="1"/>
</dbReference>
<dbReference type="FunFam" id="3.40.30.10:FF:000088">
    <property type="entry name" value="Elongation factor 1-gamma"/>
    <property type="match status" value="1"/>
</dbReference>
<dbReference type="FunFam" id="3.30.70.1010:FF:000001">
    <property type="entry name" value="Elongation factor 1-gamma 1"/>
    <property type="match status" value="1"/>
</dbReference>
<dbReference type="Gene3D" id="1.20.1050.10">
    <property type="match status" value="1"/>
</dbReference>
<dbReference type="Gene3D" id="3.40.30.10">
    <property type="entry name" value="Glutaredoxin"/>
    <property type="match status" value="1"/>
</dbReference>
<dbReference type="Gene3D" id="3.30.70.1010">
    <property type="entry name" value="Translation elongation factor EF1B, gamma chain, conserved domain"/>
    <property type="match status" value="1"/>
</dbReference>
<dbReference type="InterPro" id="IPR050802">
    <property type="entry name" value="EF-GSTs"/>
</dbReference>
<dbReference type="InterPro" id="IPR001662">
    <property type="entry name" value="EF1B_G_C"/>
</dbReference>
<dbReference type="InterPro" id="IPR036433">
    <property type="entry name" value="EF1B_G_C_sf"/>
</dbReference>
<dbReference type="InterPro" id="IPR010987">
    <property type="entry name" value="Glutathione-S-Trfase_C-like"/>
</dbReference>
<dbReference type="InterPro" id="IPR036282">
    <property type="entry name" value="Glutathione-S-Trfase_C_sf"/>
</dbReference>
<dbReference type="InterPro" id="IPR040079">
    <property type="entry name" value="Glutathione_S-Trfase"/>
</dbReference>
<dbReference type="InterPro" id="IPR004045">
    <property type="entry name" value="Glutathione_S-Trfase_N"/>
</dbReference>
<dbReference type="InterPro" id="IPR004046">
    <property type="entry name" value="GST_C"/>
</dbReference>
<dbReference type="InterPro" id="IPR036249">
    <property type="entry name" value="Thioredoxin-like_sf"/>
</dbReference>
<dbReference type="PANTHER" id="PTHR43986">
    <property type="entry name" value="ELONGATION FACTOR 1-GAMMA"/>
    <property type="match status" value="1"/>
</dbReference>
<dbReference type="PANTHER" id="PTHR43986:SF1">
    <property type="entry name" value="ELONGATION FACTOR 1-GAMMA"/>
    <property type="match status" value="1"/>
</dbReference>
<dbReference type="Pfam" id="PF00647">
    <property type="entry name" value="EF1G"/>
    <property type="match status" value="1"/>
</dbReference>
<dbReference type="Pfam" id="PF00043">
    <property type="entry name" value="GST_C"/>
    <property type="match status" value="1"/>
</dbReference>
<dbReference type="Pfam" id="PF02798">
    <property type="entry name" value="GST_N"/>
    <property type="match status" value="1"/>
</dbReference>
<dbReference type="SFLD" id="SFLDS00019">
    <property type="entry name" value="Glutathione_Transferase_(cytos"/>
    <property type="match status" value="1"/>
</dbReference>
<dbReference type="SFLD" id="SFLDG00358">
    <property type="entry name" value="Main_(cytGST)"/>
    <property type="match status" value="1"/>
</dbReference>
<dbReference type="SMART" id="SM01183">
    <property type="entry name" value="EF1G"/>
    <property type="match status" value="1"/>
</dbReference>
<dbReference type="SUPFAM" id="SSF89942">
    <property type="entry name" value="eEF1-gamma domain"/>
    <property type="match status" value="1"/>
</dbReference>
<dbReference type="SUPFAM" id="SSF47616">
    <property type="entry name" value="GST C-terminal domain-like"/>
    <property type="match status" value="1"/>
</dbReference>
<dbReference type="SUPFAM" id="SSF52833">
    <property type="entry name" value="Thioredoxin-like"/>
    <property type="match status" value="1"/>
</dbReference>
<dbReference type="PROSITE" id="PS50040">
    <property type="entry name" value="EF1G_C"/>
    <property type="match status" value="1"/>
</dbReference>
<dbReference type="PROSITE" id="PS50405">
    <property type="entry name" value="GST_CTER"/>
    <property type="match status" value="1"/>
</dbReference>
<dbReference type="PROSITE" id="PS50404">
    <property type="entry name" value="GST_NTER"/>
    <property type="match status" value="1"/>
</dbReference>
<name>EF1G_RAT</name>
<evidence type="ECO:0000250" key="1"/>
<evidence type="ECO:0000250" key="2">
    <source>
        <dbReference type="UniProtKB" id="P26641"/>
    </source>
</evidence>
<evidence type="ECO:0000250" key="3">
    <source>
        <dbReference type="UniProtKB" id="Q9D8N0"/>
    </source>
</evidence>
<evidence type="ECO:0000255" key="4">
    <source>
        <dbReference type="PROSITE-ProRule" id="PRU00519"/>
    </source>
</evidence>
<evidence type="ECO:0000256" key="5">
    <source>
        <dbReference type="SAM" id="MobiDB-lite"/>
    </source>
</evidence>
<accession>Q68FR6</accession>
<accession>Q4FZZ5</accession>
<comment type="function">
    <text>Probably plays a role in anchoring the complex to other cellular components.</text>
</comment>
<comment type="subunit">
    <text>EF-1 is composed of four subunits: alpha, beta, delta, and gamma.</text>
</comment>
<reference key="1">
    <citation type="journal article" date="2004" name="Genome Res.">
        <title>The status, quality, and expansion of the NIH full-length cDNA project: the Mammalian Gene Collection (MGC).</title>
        <authorList>
            <consortium name="The MGC Project Team"/>
        </authorList>
    </citation>
    <scope>NUCLEOTIDE SEQUENCE [LARGE SCALE MRNA]</scope>
    <source>
        <tissue>Spleen</tissue>
        <tissue>Testis</tissue>
    </source>
</reference>
<gene>
    <name type="primary">Eef1g</name>
</gene>
<keyword id="KW-0007">Acetylation</keyword>
<keyword id="KW-0251">Elongation factor</keyword>
<keyword id="KW-1017">Isopeptide bond</keyword>
<keyword id="KW-0648">Protein biosynthesis</keyword>
<keyword id="KW-1185">Reference proteome</keyword>
<keyword id="KW-0832">Ubl conjugation</keyword>
<proteinExistence type="evidence at transcript level"/>
<organism>
    <name type="scientific">Rattus norvegicus</name>
    <name type="common">Rat</name>
    <dbReference type="NCBI Taxonomy" id="10116"/>
    <lineage>
        <taxon>Eukaryota</taxon>
        <taxon>Metazoa</taxon>
        <taxon>Chordata</taxon>
        <taxon>Craniata</taxon>
        <taxon>Vertebrata</taxon>
        <taxon>Euteleostomi</taxon>
        <taxon>Mammalia</taxon>
        <taxon>Eutheria</taxon>
        <taxon>Euarchontoglires</taxon>
        <taxon>Glires</taxon>
        <taxon>Rodentia</taxon>
        <taxon>Myomorpha</taxon>
        <taxon>Muroidea</taxon>
        <taxon>Muridae</taxon>
        <taxon>Murinae</taxon>
        <taxon>Rattus</taxon>
    </lineage>
</organism>
<protein>
    <recommendedName>
        <fullName>Elongation factor 1-gamma</fullName>
        <shortName>EF-1-gamma</shortName>
    </recommendedName>
    <alternativeName>
        <fullName>eEF-1B gamma</fullName>
    </alternativeName>
</protein>